<gene>
    <name evidence="8" type="primary">dvl2</name>
    <name evidence="2" type="synonym">dsh</name>
</gene>
<dbReference type="EMBL" id="BC123948">
    <property type="protein sequence ID" value="AAI23949.1"/>
    <property type="molecule type" value="mRNA"/>
</dbReference>
<dbReference type="RefSeq" id="NP_001072660.1">
    <property type="nucleotide sequence ID" value="NM_001079192.1"/>
</dbReference>
<dbReference type="SMR" id="Q05AS8"/>
<dbReference type="FunCoup" id="Q05AS8">
    <property type="interactions" value="4415"/>
</dbReference>
<dbReference type="STRING" id="8364.ENSXETP00000029183"/>
<dbReference type="PaxDb" id="8364-ENSXETP00000037494"/>
<dbReference type="DNASU" id="780117"/>
<dbReference type="GeneID" id="780117"/>
<dbReference type="KEGG" id="xtr:780117"/>
<dbReference type="AGR" id="Xenbase:XB-GENE-1017461"/>
<dbReference type="CTD" id="1856"/>
<dbReference type="Xenbase" id="XB-GENE-1017461">
    <property type="gene designation" value="dvl2"/>
</dbReference>
<dbReference type="eggNOG" id="KOG3571">
    <property type="taxonomic scope" value="Eukaryota"/>
</dbReference>
<dbReference type="InParanoid" id="Q05AS8"/>
<dbReference type="OMA" id="CENYLVN"/>
<dbReference type="OrthoDB" id="10031689at2759"/>
<dbReference type="Reactome" id="R-XTR-201688">
    <property type="pathway name" value="WNT mediated activation of DVL"/>
</dbReference>
<dbReference type="Reactome" id="R-XTR-2028269">
    <property type="pathway name" value="Signaling by Hippo"/>
</dbReference>
<dbReference type="Reactome" id="R-XTR-4086400">
    <property type="pathway name" value="PCP/CE pathway"/>
</dbReference>
<dbReference type="Reactome" id="R-XTR-4641258">
    <property type="pathway name" value="Degradation of DVL"/>
</dbReference>
<dbReference type="Reactome" id="R-XTR-5099900">
    <property type="pathway name" value="WNT5A-dependent internalization of FZD4"/>
</dbReference>
<dbReference type="Reactome" id="R-XTR-5663220">
    <property type="pathway name" value="RHO GTPases Activate Formins"/>
</dbReference>
<dbReference type="Reactome" id="R-XTR-8856825">
    <property type="pathway name" value="Cargo recognition for clathrin-mediated endocytosis"/>
</dbReference>
<dbReference type="Proteomes" id="UP000008143">
    <property type="component" value="Chromosome 3"/>
</dbReference>
<dbReference type="GO" id="GO:0009986">
    <property type="term" value="C:cell surface"/>
    <property type="evidence" value="ECO:0000250"/>
    <property type="project" value="UniProtKB"/>
</dbReference>
<dbReference type="GO" id="GO:0035253">
    <property type="term" value="C:ciliary rootlet"/>
    <property type="evidence" value="ECO:0000250"/>
    <property type="project" value="UniProtKB"/>
</dbReference>
<dbReference type="GO" id="GO:0005737">
    <property type="term" value="C:cytoplasm"/>
    <property type="evidence" value="ECO:0000250"/>
    <property type="project" value="UniProtKB"/>
</dbReference>
<dbReference type="GO" id="GO:0031410">
    <property type="term" value="C:cytoplasmic vesicle"/>
    <property type="evidence" value="ECO:0000250"/>
    <property type="project" value="UniProtKB"/>
</dbReference>
<dbReference type="GO" id="GO:0005634">
    <property type="term" value="C:nucleus"/>
    <property type="evidence" value="ECO:0000250"/>
    <property type="project" value="UniProtKB"/>
</dbReference>
<dbReference type="GO" id="GO:0005886">
    <property type="term" value="C:plasma membrane"/>
    <property type="evidence" value="ECO:0000250"/>
    <property type="project" value="UniProtKB"/>
</dbReference>
<dbReference type="GO" id="GO:0046875">
    <property type="term" value="F:ephrin receptor binding"/>
    <property type="evidence" value="ECO:0000250"/>
    <property type="project" value="UniProtKB"/>
</dbReference>
<dbReference type="GO" id="GO:0042802">
    <property type="term" value="F:identical protein binding"/>
    <property type="evidence" value="ECO:0000250"/>
    <property type="project" value="UniProtKB"/>
</dbReference>
<dbReference type="GO" id="GO:0045545">
    <property type="term" value="F:syndecan binding"/>
    <property type="evidence" value="ECO:0000250"/>
    <property type="project" value="UniProtKB"/>
</dbReference>
<dbReference type="GO" id="GO:0090630">
    <property type="term" value="P:activation of GTPase activity"/>
    <property type="evidence" value="ECO:0000250"/>
    <property type="project" value="UniProtKB"/>
</dbReference>
<dbReference type="GO" id="GO:0009948">
    <property type="term" value="P:anterior/posterior axis specification"/>
    <property type="evidence" value="ECO:0000250"/>
    <property type="project" value="UniProtKB"/>
</dbReference>
<dbReference type="GO" id="GO:0060070">
    <property type="term" value="P:canonical Wnt signaling pathway"/>
    <property type="evidence" value="ECO:0000250"/>
    <property type="project" value="UniProtKB"/>
</dbReference>
<dbReference type="GO" id="GO:0032053">
    <property type="term" value="P:ciliary basal body organization"/>
    <property type="evidence" value="ECO:0000250"/>
    <property type="project" value="UniProtKB"/>
</dbReference>
<dbReference type="GO" id="GO:0060271">
    <property type="term" value="P:cilium assembly"/>
    <property type="evidence" value="ECO:0000250"/>
    <property type="project" value="UniProtKB"/>
</dbReference>
<dbReference type="GO" id="GO:0060026">
    <property type="term" value="P:convergent extension"/>
    <property type="evidence" value="ECO:0000250"/>
    <property type="project" value="UniProtKB"/>
</dbReference>
<dbReference type="GO" id="GO:0060027">
    <property type="term" value="P:convergent extension involved in gastrulation"/>
    <property type="evidence" value="ECO:0000250"/>
    <property type="project" value="UniProtKB"/>
</dbReference>
<dbReference type="GO" id="GO:0009950">
    <property type="term" value="P:dorsal/ventral axis specification"/>
    <property type="evidence" value="ECO:0000250"/>
    <property type="project" value="UniProtKB"/>
</dbReference>
<dbReference type="GO" id="GO:0048013">
    <property type="term" value="P:ephrin receptor signaling pathway"/>
    <property type="evidence" value="ECO:0000250"/>
    <property type="project" value="UniProtKB"/>
</dbReference>
<dbReference type="GO" id="GO:0001736">
    <property type="term" value="P:establishment of planar polarity"/>
    <property type="evidence" value="ECO:0000250"/>
    <property type="project" value="UniProtKB"/>
</dbReference>
<dbReference type="GO" id="GO:0007163">
    <property type="term" value="P:establishment or maintenance of cell polarity"/>
    <property type="evidence" value="ECO:0000250"/>
    <property type="project" value="UniProtKB"/>
</dbReference>
<dbReference type="GO" id="GO:0001702">
    <property type="term" value="P:gastrulation with mouth forming second"/>
    <property type="evidence" value="ECO:0000250"/>
    <property type="project" value="UniProtKB"/>
</dbReference>
<dbReference type="GO" id="GO:0035556">
    <property type="term" value="P:intracellular signal transduction"/>
    <property type="evidence" value="ECO:0007669"/>
    <property type="project" value="InterPro"/>
</dbReference>
<dbReference type="GO" id="GO:0001843">
    <property type="term" value="P:neural tube closure"/>
    <property type="evidence" value="ECO:0000250"/>
    <property type="project" value="UniProtKB"/>
</dbReference>
<dbReference type="GO" id="GO:0022008">
    <property type="term" value="P:neurogenesis"/>
    <property type="evidence" value="ECO:0000250"/>
    <property type="project" value="UniProtKB"/>
</dbReference>
<dbReference type="GO" id="GO:0050821">
    <property type="term" value="P:protein stabilization"/>
    <property type="evidence" value="ECO:0000250"/>
    <property type="project" value="UniProtKB"/>
</dbReference>
<dbReference type="CDD" id="cd04438">
    <property type="entry name" value="DEP_dishevelled"/>
    <property type="match status" value="1"/>
</dbReference>
<dbReference type="CDD" id="cd06717">
    <property type="entry name" value="PDZ_Dishevelled-like"/>
    <property type="match status" value="1"/>
</dbReference>
<dbReference type="FunFam" id="2.40.240.130:FF:000001">
    <property type="entry name" value="Segment polarity protein dishevelled homolog DVL-1"/>
    <property type="match status" value="1"/>
</dbReference>
<dbReference type="FunFam" id="2.30.42.10:FF:000014">
    <property type="entry name" value="Segment polarity protein dishevelled homolog DVL-3"/>
    <property type="match status" value="1"/>
</dbReference>
<dbReference type="FunFam" id="1.10.10.10:FF:000040">
    <property type="entry name" value="segment polarity protein dishevelled homolog DVL-3"/>
    <property type="match status" value="1"/>
</dbReference>
<dbReference type="Gene3D" id="2.30.42.10">
    <property type="match status" value="1"/>
</dbReference>
<dbReference type="Gene3D" id="2.40.240.130">
    <property type="match status" value="1"/>
</dbReference>
<dbReference type="Gene3D" id="1.10.10.10">
    <property type="entry name" value="Winged helix-like DNA-binding domain superfamily/Winged helix DNA-binding domain"/>
    <property type="match status" value="1"/>
</dbReference>
<dbReference type="InterPro" id="IPR000591">
    <property type="entry name" value="DEP_dom"/>
</dbReference>
<dbReference type="InterPro" id="IPR024580">
    <property type="entry name" value="Dishevelled_C-dom"/>
</dbReference>
<dbReference type="InterPro" id="IPR008339">
    <property type="entry name" value="Dishevelled_fam"/>
</dbReference>
<dbReference type="InterPro" id="IPR003351">
    <property type="entry name" value="Dishevelled_protein_dom"/>
</dbReference>
<dbReference type="InterPro" id="IPR001158">
    <property type="entry name" value="DIX"/>
</dbReference>
<dbReference type="InterPro" id="IPR038207">
    <property type="entry name" value="DIX_dom_sf"/>
</dbReference>
<dbReference type="InterPro" id="IPR015506">
    <property type="entry name" value="Dsh/Dvl-rel"/>
</dbReference>
<dbReference type="InterPro" id="IPR008341">
    <property type="entry name" value="DVL2"/>
</dbReference>
<dbReference type="InterPro" id="IPR001478">
    <property type="entry name" value="PDZ"/>
</dbReference>
<dbReference type="InterPro" id="IPR036034">
    <property type="entry name" value="PDZ_sf"/>
</dbReference>
<dbReference type="InterPro" id="IPR029071">
    <property type="entry name" value="Ubiquitin-like_domsf"/>
</dbReference>
<dbReference type="InterPro" id="IPR036388">
    <property type="entry name" value="WH-like_DNA-bd_sf"/>
</dbReference>
<dbReference type="InterPro" id="IPR036390">
    <property type="entry name" value="WH_DNA-bd_sf"/>
</dbReference>
<dbReference type="PANTHER" id="PTHR10878">
    <property type="entry name" value="SEGMENT POLARITY PROTEIN DISHEVELLED"/>
    <property type="match status" value="1"/>
</dbReference>
<dbReference type="PANTHER" id="PTHR10878:SF8">
    <property type="entry name" value="SEGMENT POLARITY PROTEIN DISHEVELLED HOMOLOG DVL-2"/>
    <property type="match status" value="1"/>
</dbReference>
<dbReference type="Pfam" id="PF00610">
    <property type="entry name" value="DEP"/>
    <property type="match status" value="1"/>
</dbReference>
<dbReference type="Pfam" id="PF02377">
    <property type="entry name" value="Dishevelled"/>
    <property type="match status" value="1"/>
</dbReference>
<dbReference type="Pfam" id="PF00778">
    <property type="entry name" value="DIX"/>
    <property type="match status" value="1"/>
</dbReference>
<dbReference type="Pfam" id="PF12316">
    <property type="entry name" value="Dsh_C"/>
    <property type="match status" value="1"/>
</dbReference>
<dbReference type="Pfam" id="PF00595">
    <property type="entry name" value="PDZ"/>
    <property type="match status" value="1"/>
</dbReference>
<dbReference type="PRINTS" id="PR01760">
    <property type="entry name" value="DISHEVELLED"/>
</dbReference>
<dbReference type="PRINTS" id="PR01762">
    <property type="entry name" value="DISHEVELLED2"/>
</dbReference>
<dbReference type="SMART" id="SM00021">
    <property type="entry name" value="DAX"/>
    <property type="match status" value="1"/>
</dbReference>
<dbReference type="SMART" id="SM00049">
    <property type="entry name" value="DEP"/>
    <property type="match status" value="1"/>
</dbReference>
<dbReference type="SMART" id="SM00228">
    <property type="entry name" value="PDZ"/>
    <property type="match status" value="1"/>
</dbReference>
<dbReference type="SUPFAM" id="SSF50156">
    <property type="entry name" value="PDZ domain-like"/>
    <property type="match status" value="1"/>
</dbReference>
<dbReference type="SUPFAM" id="SSF54236">
    <property type="entry name" value="Ubiquitin-like"/>
    <property type="match status" value="1"/>
</dbReference>
<dbReference type="SUPFAM" id="SSF46785">
    <property type="entry name" value="Winged helix' DNA-binding domain"/>
    <property type="match status" value="1"/>
</dbReference>
<dbReference type="PROSITE" id="PS50186">
    <property type="entry name" value="DEP"/>
    <property type="match status" value="1"/>
</dbReference>
<dbReference type="PROSITE" id="PS50841">
    <property type="entry name" value="DIX"/>
    <property type="match status" value="1"/>
</dbReference>
<dbReference type="PROSITE" id="PS50106">
    <property type="entry name" value="PDZ"/>
    <property type="match status" value="1"/>
</dbReference>
<accession>Q05AS8</accession>
<proteinExistence type="evidence at transcript level"/>
<name>DVL2_XENTR</name>
<feature type="chain" id="PRO_0000354665" description="Segment polarity protein dishevelled homolog DVL-2">
    <location>
        <begin position="1"/>
        <end position="732"/>
    </location>
</feature>
<feature type="domain" description="DIX" evidence="5">
    <location>
        <begin position="1"/>
        <end position="82"/>
    </location>
</feature>
<feature type="domain" description="PDZ" evidence="6">
    <location>
        <begin position="250"/>
        <end position="335"/>
    </location>
</feature>
<feature type="domain" description="DEP" evidence="4">
    <location>
        <begin position="424"/>
        <end position="498"/>
    </location>
</feature>
<feature type="region of interest" description="Disordered" evidence="7">
    <location>
        <begin position="81"/>
        <end position="181"/>
    </location>
</feature>
<feature type="region of interest" description="Disordered" evidence="7">
    <location>
        <begin position="195"/>
        <end position="237"/>
    </location>
</feature>
<feature type="region of interest" description="Disordered" evidence="7">
    <location>
        <begin position="570"/>
        <end position="660"/>
    </location>
</feature>
<feature type="compositionally biased region" description="Pro residues" evidence="7">
    <location>
        <begin position="98"/>
        <end position="111"/>
    </location>
</feature>
<feature type="compositionally biased region" description="Basic and acidic residues" evidence="7">
    <location>
        <begin position="146"/>
        <end position="157"/>
    </location>
</feature>
<feature type="compositionally biased region" description="Polar residues" evidence="7">
    <location>
        <begin position="202"/>
        <end position="213"/>
    </location>
</feature>
<feature type="compositionally biased region" description="Basic residues" evidence="7">
    <location>
        <begin position="215"/>
        <end position="227"/>
    </location>
</feature>
<feature type="compositionally biased region" description="Low complexity" evidence="7">
    <location>
        <begin position="570"/>
        <end position="589"/>
    </location>
</feature>
<feature type="compositionally biased region" description="Low complexity" evidence="7">
    <location>
        <begin position="612"/>
        <end position="629"/>
    </location>
</feature>
<feature type="compositionally biased region" description="Low complexity" evidence="7">
    <location>
        <begin position="637"/>
        <end position="647"/>
    </location>
</feature>
<organism>
    <name type="scientific">Xenopus tropicalis</name>
    <name type="common">Western clawed frog</name>
    <name type="synonym">Silurana tropicalis</name>
    <dbReference type="NCBI Taxonomy" id="8364"/>
    <lineage>
        <taxon>Eukaryota</taxon>
        <taxon>Metazoa</taxon>
        <taxon>Chordata</taxon>
        <taxon>Craniata</taxon>
        <taxon>Vertebrata</taxon>
        <taxon>Euteleostomi</taxon>
        <taxon>Amphibia</taxon>
        <taxon>Batrachia</taxon>
        <taxon>Anura</taxon>
        <taxon>Pipoidea</taxon>
        <taxon>Pipidae</taxon>
        <taxon>Xenopodinae</taxon>
        <taxon>Xenopus</taxon>
        <taxon>Silurana</taxon>
    </lineage>
</organism>
<comment type="function">
    <text evidence="2">Involved in at least 2 independent signaling cascades, controlling cell fate via canonical Wnt signaling and cell polarity via a planar cell polarity (PCP) cascade. Acts synergistically with dal/dapple-like to activate Wnt signaling, stabilizing ctnnb1/beta-catenin and leading to dorsal axis formation. Also prevents degradation of ctnnb1/beta-catenin by displacing gsk3 from a complex with ARP/Axin-related protein. Has an additional role in anterior-posterior (A/P) axis formation, specifying different neuroectodermal cell fates along the A/P axis in a dose-dependent manner by activating several early patterning genes. In the PCP pathway, required at the cell membrane for PCP-mediated neural and mesodermal convergent extension during gastrulation and subsequent neural tube closure, acting to activate jnk. Also involved in blastopore closure and archenteron elongation during early, but not late, gastrulation. Associates with ephrin receptors and ligands and acts as part of a downstream PCP pathway to mediate ephrin-mediated cell repulsion via activation of rhoa. Required for efnb1/ephrin-B1-driven movement of non-retinal progenitor cells into the retina during eye field formation. Patterns the hindbrain. Required for ciliogenesis. Controls the docking of basal bodies to the apical plasma membrane; mediates the activation, but not localization of rhoa at the apical surface of ciliated cells during basal body docking. Furthermore, required for the association of basal bodies with membrane-bound vesicles and the vesicle-trafficking protein exoc4/sec8, and this association is in turn required for basal body docking. Once basal bodies are docked, required for the planar polarization of basal bodies that underlies ciliary beating and the directional fluid flow across ciliated epithelia (By similarity).</text>
</comment>
<comment type="subunit">
    <text evidence="1">Can form homomultimers. Interacts with prickle1. Interacts (via the PDZ domain) with ccdc88c/dal and dact1-B/dpr. Interacts (via the DIX domain) with ARP/Axin-related protein and dact1-A/frodo. Interacts with sdc4, possibly via fz7. Interacts directly (via the DEP domain) with efnb1/ephrin-B1. May interact indirectly with the phosphorylated ephrin receptors ephb1 and ephb2 via SH domain-containing adapters (By similarity).</text>
</comment>
<comment type="subcellular location">
    <subcellularLocation>
        <location evidence="2">Cytoplasm</location>
    </subcellularLocation>
    <subcellularLocation>
        <location evidence="2">Cytoplasmic vesicle</location>
    </subcellularLocation>
    <subcellularLocation>
        <location evidence="2">Cell projection</location>
        <location evidence="2">Cilium</location>
    </subcellularLocation>
    <subcellularLocation>
        <location evidence="2">Nucleus</location>
    </subcellularLocation>
    <subcellularLocation>
        <location evidence="2">Cell membrane</location>
        <topology evidence="2">Peripheral membrane protein</topology>
    </subcellularLocation>
    <text evidence="1">Recruited from the cytoplasm to the cell membrane by frizzled proteins. Also relocated to the cell membrane by sdc4 and ephb1/ephrin-B1. Concentrated at the cell membrane in both ciliated and non-ciliated cells. Enriched at the apical surface of ciliated cells. Localized to the cilium rootlet (By similarity).</text>
</comment>
<comment type="domain">
    <text evidence="1">The C-terminal region containing the DEP domain is required for membrane accumulation and phosphorylation. Wnt signaling and axis induction requires the DIX domain. The C-terminus contributes to the localization at the cilia base (By similarity).</text>
</comment>
<comment type="PTM">
    <text evidence="2">Phosphorylated. Phosphorylation is controlled by frizzled proteins, correlates with the onset of embryo dorsalizing events and is higher in the dorsal half of early cleavage embryos. Phosphorylated on tyrosine residues in response to association with efnb1/ephrin-B1 (By similarity).</text>
</comment>
<comment type="similarity">
    <text evidence="3">Belongs to the DSH family.</text>
</comment>
<protein>
    <recommendedName>
        <fullName evidence="2">Segment polarity protein dishevelled homolog DVL-2</fullName>
        <shortName evidence="2">Dishevelled-2</shortName>
    </recommendedName>
    <alternativeName>
        <fullName>DSH homolog 2</fullName>
    </alternativeName>
</protein>
<reference evidence="8" key="1">
    <citation type="submission" date="2006-09" db="EMBL/GenBank/DDBJ databases">
        <authorList>
            <consortium name="NIH - Xenopus Gene Collection (XGC) project"/>
        </authorList>
    </citation>
    <scope>NUCLEOTIDE SEQUENCE [LARGE SCALE MRNA]</scope>
    <source>
        <tissue evidence="8">Testis</tissue>
    </source>
</reference>
<keyword id="KW-1003">Cell membrane</keyword>
<keyword id="KW-0966">Cell projection</keyword>
<keyword id="KW-0969">Cilium</keyword>
<keyword id="KW-0970">Cilium biogenesis/degradation</keyword>
<keyword id="KW-0963">Cytoplasm</keyword>
<keyword id="KW-0968">Cytoplasmic vesicle</keyword>
<keyword id="KW-0217">Developmental protein</keyword>
<keyword id="KW-0306">Gastrulation</keyword>
<keyword id="KW-0472">Membrane</keyword>
<keyword id="KW-0539">Nucleus</keyword>
<keyword id="KW-0597">Phosphoprotein</keyword>
<keyword id="KW-1185">Reference proteome</keyword>
<keyword id="KW-0879">Wnt signaling pathway</keyword>
<evidence type="ECO:0000250" key="1"/>
<evidence type="ECO:0000250" key="2">
    <source>
        <dbReference type="UniProtKB" id="P51142"/>
    </source>
</evidence>
<evidence type="ECO:0000255" key="3"/>
<evidence type="ECO:0000255" key="4">
    <source>
        <dbReference type="PROSITE-ProRule" id="PRU00066"/>
    </source>
</evidence>
<evidence type="ECO:0000255" key="5">
    <source>
        <dbReference type="PROSITE-ProRule" id="PRU00069"/>
    </source>
</evidence>
<evidence type="ECO:0000255" key="6">
    <source>
        <dbReference type="PROSITE-ProRule" id="PRU00143"/>
    </source>
</evidence>
<evidence type="ECO:0000256" key="7">
    <source>
        <dbReference type="SAM" id="MobiDB-lite"/>
    </source>
</evidence>
<evidence type="ECO:0000312" key="8">
    <source>
        <dbReference type="EMBL" id="AAI23949.1"/>
    </source>
</evidence>
<sequence>MAETKVIYHLDEEETPYLVKVPVPANEIRLRDFKAALGRGHAKYFFKAMDQDFGVVKEEISDDNAKLPCFNGRVVSWLVSSETSQTDSAPPAAEVRPDPPPVPPPVPPPPAERTSGIGDSRPPSFHPNVSGSTEQLDQDNESVISMRRDRVRRRDSTEQGVARGVNGRAERHLSGYESSSTLLTSEIETSICDSEEDDAMSRFSSSTEQSSASRLLKRHRRRRKQRPPRLERTSSFSSVTDSTMSLNIITVTLNMEKYNFLGISIVGQSNERGDGGIYIGSIMKGGAVAADGRIEPGDMLLQVNDINFENMSNDDAVRVLRDIVHKPGPIILTVAKCWDPSPQGYFTLPRNEPIQPIDPAAWVSHSAALSGSFPVYPGSASMSSMTSSTSVTETELSHALPPVSLFSLSVHTDLASVAKVMASPESGLEVRDRMWLKITIPNAFLGSDMVDWLYHHVEGFQDRREARKFASNLLKAGLIRHTVNKITFSEQCYYIFGDLTGCENYMANLSLNDNDGSSGASDQDTLAPLPLPGASPWPLLPTFSYQYPAPHPYSTQPPAYHELSSYSYGMGSAGSQHSEGSRSSGSNRSDGGRGTQKDERSGVVGVGGGESKSGSGSESEYSTRSSIRRIGGGEAGPPSERSTSSRPPLHHPPSVHSYAAPGVPLSYNPMMLMMMPPPPLPPPGACPPSSSVPPGAPPLVRDLASVPPELTASRQSFHMAMGNPSEFFVDVM</sequence>